<sequence length="124" mass="14014">MKNVLIIFGKPYCSICENVSEAVEELKSEYDILHVDILSFFLKDGDSSMLGDVKRGTLIGNFAAHLSNYIVSIFKYNPQTKQMAFVDINKSLDFTKTDKSLVNLEILKSEIEKANYGVWPPVTE</sequence>
<evidence type="ECO:0000250" key="1">
    <source>
        <dbReference type="UniProtKB" id="P68460"/>
    </source>
</evidence>
<evidence type="ECO:0000305" key="2"/>
<comment type="function">
    <text evidence="1">Glutaredoxin necessary for virion morphogenesis and virus replication. Functions as a thiol-disulfide transfer protein between membrane-associated OPG128 and substrates OPG095 or OPG053. The complete pathway for formation of disulfide bonds in intracellular virion membrane proteins sequentially involves oxidation of OPG072, OPG128 and OPG088. Exhibit thioltransferase and dehydroascorbate reductase activities in vitro.</text>
</comment>
<comment type="subunit">
    <text evidence="1">Homodimer.</text>
</comment>
<comment type="subcellular location">
    <subcellularLocation>
        <location evidence="1">Host cytoplasm</location>
    </subcellularLocation>
</comment>
<comment type="induction">
    <text evidence="1">Expressed in the intermediate phase of the viral replicative cycle.</text>
</comment>
<comment type="similarity">
    <text evidence="2">Belongs to the glutaredoxin family.</text>
</comment>
<accession>Q77FQ5</accession>
<name>GLRX2_CAMPM</name>
<protein>
    <recommendedName>
        <fullName>Glutaredoxin-2</fullName>
    </recommendedName>
</protein>
<gene>
    <name type="primary">OPG088</name>
    <name type="ordered locus">CMLV079</name>
</gene>
<organismHost>
    <name type="scientific">Camelus</name>
    <dbReference type="NCBI Taxonomy" id="9836"/>
</organismHost>
<proteinExistence type="inferred from homology"/>
<organism>
    <name type="scientific">Camelpox virus (strain M-96)</name>
    <dbReference type="NCBI Taxonomy" id="203173"/>
    <lineage>
        <taxon>Viruses</taxon>
        <taxon>Varidnaviria</taxon>
        <taxon>Bamfordvirae</taxon>
        <taxon>Nucleocytoviricota</taxon>
        <taxon>Pokkesviricetes</taxon>
        <taxon>Chitovirales</taxon>
        <taxon>Poxviridae</taxon>
        <taxon>Chordopoxvirinae</taxon>
        <taxon>Orthopoxvirus</taxon>
        <taxon>Camelpox virus</taxon>
    </lineage>
</organism>
<feature type="chain" id="PRO_0000141631" description="Glutaredoxin-2">
    <location>
        <begin position="1"/>
        <end position="124"/>
    </location>
</feature>
<feature type="disulfide bond" description="Redox-active" evidence="1">
    <location>
        <begin position="13"/>
        <end position="16"/>
    </location>
</feature>
<reference key="1">
    <citation type="journal article" date="2002" name="Virology">
        <title>The genome of camelpox virus.</title>
        <authorList>
            <person name="Afonso C.L."/>
            <person name="Tulman E.R."/>
            <person name="Lu Z."/>
            <person name="Zsak L."/>
            <person name="Sandybaev N.T."/>
            <person name="Kerembekova U.Z."/>
            <person name="Zaitsev V.L."/>
            <person name="Kutish G.F."/>
            <person name="Rock D.L."/>
        </authorList>
    </citation>
    <scope>NUCLEOTIDE SEQUENCE [LARGE SCALE GENOMIC DNA]</scope>
</reference>
<dbReference type="EMBL" id="AF438165">
    <property type="protein sequence ID" value="AAL73786.1"/>
    <property type="molecule type" value="Genomic_DNA"/>
</dbReference>
<dbReference type="RefSeq" id="NP_570469.1">
    <property type="nucleotide sequence ID" value="NC_003391.1"/>
</dbReference>
<dbReference type="SMR" id="Q77FQ5"/>
<dbReference type="KEGG" id="vg:932525"/>
<dbReference type="Proteomes" id="UP000152221">
    <property type="component" value="Genome"/>
</dbReference>
<dbReference type="GO" id="GO:0030430">
    <property type="term" value="C:host cell cytoplasm"/>
    <property type="evidence" value="ECO:0007669"/>
    <property type="project" value="UniProtKB-SubCell"/>
</dbReference>
<dbReference type="Gene3D" id="3.40.30.10">
    <property type="entry name" value="Glutaredoxin"/>
    <property type="match status" value="1"/>
</dbReference>
<dbReference type="InterPro" id="IPR008554">
    <property type="entry name" value="Glutaredoxin-like"/>
</dbReference>
<dbReference type="InterPro" id="IPR036249">
    <property type="entry name" value="Thioredoxin-like_sf"/>
</dbReference>
<dbReference type="Pfam" id="PF05768">
    <property type="entry name" value="Glrx-like"/>
    <property type="match status" value="1"/>
</dbReference>
<dbReference type="SUPFAM" id="SSF52833">
    <property type="entry name" value="Thioredoxin-like"/>
    <property type="match status" value="1"/>
</dbReference>
<keyword id="KW-1015">Disulfide bond</keyword>
<keyword id="KW-0249">Electron transport</keyword>
<keyword id="KW-1035">Host cytoplasm</keyword>
<keyword id="KW-0676">Redox-active center</keyword>
<keyword id="KW-0813">Transport</keyword>